<sequence>MSSFACWSLSLLILFYSPGSGEKAFEVYIWSEKQIVEATESWKINCSTNCAAPDMGGLETPTNKIMLEEHPQGKWKQFLVSNVSKDTVFFCHFTCSGKQHSESLNIRVYQPPAQVTLKLQPPRVFVGEDFTIECTVSPVQPLERLTLSLLRGRETLKNQTFGGAETVPQEATATFNSTALKKDGLNFSCQAELDLRPHGGYIIRSISEYQILEVYEPMQDNQMVIIIVVVSILLFLFVTSVLLCFIFGQHWHRRRTGTYGVLAAWRRLPRAFRARPV</sequence>
<proteinExistence type="evidence at protein level"/>
<name>ICAM2_MOUSE</name>
<evidence type="ECO:0000250" key="1"/>
<evidence type="ECO:0000250" key="2">
    <source>
        <dbReference type="UniProtKB" id="P13598"/>
    </source>
</evidence>
<evidence type="ECO:0000255" key="3"/>
<evidence type="ECO:0000269" key="4">
    <source>
    </source>
</evidence>
<evidence type="ECO:0000305" key="5"/>
<evidence type="ECO:0007829" key="6">
    <source>
        <dbReference type="PDB" id="1J19"/>
    </source>
</evidence>
<feature type="signal peptide" evidence="1">
    <location>
        <begin position="1"/>
        <end position="22"/>
    </location>
</feature>
<feature type="chain" id="PRO_0000014791" description="Intercellular adhesion molecule 2">
    <location>
        <begin position="23"/>
        <end position="277"/>
    </location>
</feature>
<feature type="topological domain" description="Extracellular" evidence="3">
    <location>
        <begin position="23"/>
        <end position="222"/>
    </location>
</feature>
<feature type="transmembrane region" description="Helical" evidence="3">
    <location>
        <begin position="223"/>
        <end position="247"/>
    </location>
</feature>
<feature type="topological domain" description="Cytoplasmic" evidence="3">
    <location>
        <begin position="248"/>
        <end position="277"/>
    </location>
</feature>
<feature type="domain" description="Ig-like C2-type 1">
    <location>
        <begin position="39"/>
        <end position="98"/>
    </location>
</feature>
<feature type="domain" description="Ig-like C2-type 2">
    <location>
        <begin position="127"/>
        <end position="196"/>
    </location>
</feature>
<feature type="region of interest" description="Required for interaction with EZR, MSN and RDX and co-localization to microvilli" evidence="4">
    <location>
        <begin position="250"/>
        <end position="277"/>
    </location>
</feature>
<feature type="glycosylation site" description="N-linked (GlcNAc...) asparagine" evidence="3">
    <location>
        <position position="45"/>
    </location>
</feature>
<feature type="glycosylation site" description="N-linked (GlcNAc...) asparagine" evidence="3">
    <location>
        <position position="82"/>
    </location>
</feature>
<feature type="glycosylation site" description="N-linked (GlcNAc...) asparagine" evidence="3">
    <location>
        <position position="158"/>
    </location>
</feature>
<feature type="glycosylation site" description="N-linked (GlcNAc...) asparagine" evidence="3">
    <location>
        <position position="176"/>
    </location>
</feature>
<feature type="glycosylation site" description="N-linked (GlcNAc...) asparagine" evidence="3">
    <location>
        <position position="186"/>
    </location>
</feature>
<feature type="disulfide bond" evidence="2">
    <location>
        <begin position="46"/>
        <end position="91"/>
    </location>
</feature>
<feature type="disulfide bond" evidence="2">
    <location>
        <begin position="50"/>
        <end position="95"/>
    </location>
</feature>
<feature type="disulfide bond" evidence="2">
    <location>
        <begin position="134"/>
        <end position="189"/>
    </location>
</feature>
<feature type="mutagenesis site" description="Loss of interaction with EZR, MSN and RDX and co-localization to microvilli." evidence="4">
    <original>RRR</original>
    <variation>GGA</variation>
    <location>
        <begin position="253"/>
        <end position="255"/>
    </location>
</feature>
<feature type="sequence conflict" description="In Ref. 2; BAB25266." evidence="5" ref="2">
    <original>F</original>
    <variation>S</variation>
    <location>
        <position position="272"/>
    </location>
</feature>
<feature type="strand" evidence="6">
    <location>
        <begin position="256"/>
        <end position="259"/>
    </location>
</feature>
<feature type="helix" evidence="6">
    <location>
        <begin position="262"/>
        <end position="264"/>
    </location>
</feature>
<keyword id="KW-0002">3D-structure</keyword>
<keyword id="KW-0130">Cell adhesion</keyword>
<keyword id="KW-0966">Cell projection</keyword>
<keyword id="KW-1015">Disulfide bond</keyword>
<keyword id="KW-0325">Glycoprotein</keyword>
<keyword id="KW-0393">Immunoglobulin domain</keyword>
<keyword id="KW-0472">Membrane</keyword>
<keyword id="KW-1185">Reference proteome</keyword>
<keyword id="KW-0677">Repeat</keyword>
<keyword id="KW-0732">Signal</keyword>
<keyword id="KW-0812">Transmembrane</keyword>
<keyword id="KW-1133">Transmembrane helix</keyword>
<organism>
    <name type="scientific">Mus musculus</name>
    <name type="common">Mouse</name>
    <dbReference type="NCBI Taxonomy" id="10090"/>
    <lineage>
        <taxon>Eukaryota</taxon>
        <taxon>Metazoa</taxon>
        <taxon>Chordata</taxon>
        <taxon>Craniata</taxon>
        <taxon>Vertebrata</taxon>
        <taxon>Euteleostomi</taxon>
        <taxon>Mammalia</taxon>
        <taxon>Eutheria</taxon>
        <taxon>Euarchontoglires</taxon>
        <taxon>Glires</taxon>
        <taxon>Rodentia</taxon>
        <taxon>Myomorpha</taxon>
        <taxon>Muroidea</taxon>
        <taxon>Muridae</taxon>
        <taxon>Murinae</taxon>
        <taxon>Mus</taxon>
        <taxon>Mus</taxon>
    </lineage>
</organism>
<protein>
    <recommendedName>
        <fullName>Intercellular adhesion molecule 2</fullName>
        <shortName>ICAM-2</shortName>
    </recommendedName>
    <alternativeName>
        <fullName>Lymphocyte function-associated AG-1 counter-receptor</fullName>
    </alternativeName>
    <cdAntigenName>CD102</cdAntigenName>
</protein>
<comment type="function">
    <text>ICAM proteins are ligands for the leukocyte adhesion protein LFA-1 (integrin alpha-L/beta-2). ICAM2 may play a role in lymphocyte recirculation by blocking LFA-1-dependent cell adhesion. It mediates adhesive interactions important for antigen-specific immune response, NK-cell mediated clearance, lymphocyte recirculation, and other cellular interactions important for immune response and surveillance.</text>
</comment>
<comment type="subunit">
    <text evidence="4">Interacts with RDX, EZR and MSN.</text>
</comment>
<comment type="interaction">
    <interactant intactId="EBI-1035485">
        <id>P35330</id>
    </interactant>
    <interactant intactId="EBI-647737">
        <id>P26043</id>
        <label>Rdx</label>
    </interactant>
    <organismsDiffer>false</organismsDiffer>
    <experiments>2</experiments>
</comment>
<comment type="subcellular location">
    <subcellularLocation>
        <location evidence="3">Membrane</location>
        <topology evidence="3">Single-pass type I membrane protein</topology>
    </subcellularLocation>
    <subcellularLocation>
        <location evidence="4">Cell projection</location>
        <location evidence="4">Microvillus</location>
    </subcellularLocation>
    <text evidence="4">Co-localizes with RDX, EZR and MSN in microvilli.</text>
</comment>
<comment type="tissue specificity">
    <text>Expressed in endothelial cells and leukocytes. High levels found in lung.</text>
</comment>
<comment type="similarity">
    <text evidence="5">Belongs to the immunoglobulin superfamily. ICAM family.</text>
</comment>
<comment type="online information" name="Functional Glycomics Gateway - Glycan Binding">
    <link uri="http://www.functionalglycomics.org/glycomics/GBPServlet?&amp;operationType=view&amp;cbpId=cbp_mou_Itlect_189"/>
    <text>ICAM-2</text>
</comment>
<reference key="1">
    <citation type="journal article" date="1992" name="J. Immunol.">
        <title>Isolation, characterization, and expression of mouse ICAM-2 complementary and genomic DNA.</title>
        <authorList>
            <person name="Xu H."/>
            <person name="Tong I.L."/>
            <person name="de Fougerolles A.R."/>
            <person name="Springer T.A."/>
        </authorList>
    </citation>
    <scope>NUCLEOTIDE SEQUENCE [GENOMIC DNA / MRNA]</scope>
    <source>
        <strain>AKR/J</strain>
        <tissue>B-cell</tissue>
    </source>
</reference>
<reference key="2">
    <citation type="journal article" date="2005" name="Science">
        <title>The transcriptional landscape of the mammalian genome.</title>
        <authorList>
            <person name="Carninci P."/>
            <person name="Kasukawa T."/>
            <person name="Katayama S."/>
            <person name="Gough J."/>
            <person name="Frith M.C."/>
            <person name="Maeda N."/>
            <person name="Oyama R."/>
            <person name="Ravasi T."/>
            <person name="Lenhard B."/>
            <person name="Wells C."/>
            <person name="Kodzius R."/>
            <person name="Shimokawa K."/>
            <person name="Bajic V.B."/>
            <person name="Brenner S.E."/>
            <person name="Batalov S."/>
            <person name="Forrest A.R."/>
            <person name="Zavolan M."/>
            <person name="Davis M.J."/>
            <person name="Wilming L.G."/>
            <person name="Aidinis V."/>
            <person name="Allen J.E."/>
            <person name="Ambesi-Impiombato A."/>
            <person name="Apweiler R."/>
            <person name="Aturaliya R.N."/>
            <person name="Bailey T.L."/>
            <person name="Bansal M."/>
            <person name="Baxter L."/>
            <person name="Beisel K.W."/>
            <person name="Bersano T."/>
            <person name="Bono H."/>
            <person name="Chalk A.M."/>
            <person name="Chiu K.P."/>
            <person name="Choudhary V."/>
            <person name="Christoffels A."/>
            <person name="Clutterbuck D.R."/>
            <person name="Crowe M.L."/>
            <person name="Dalla E."/>
            <person name="Dalrymple B.P."/>
            <person name="de Bono B."/>
            <person name="Della Gatta G."/>
            <person name="di Bernardo D."/>
            <person name="Down T."/>
            <person name="Engstrom P."/>
            <person name="Fagiolini M."/>
            <person name="Faulkner G."/>
            <person name="Fletcher C.F."/>
            <person name="Fukushima T."/>
            <person name="Furuno M."/>
            <person name="Futaki S."/>
            <person name="Gariboldi M."/>
            <person name="Georgii-Hemming P."/>
            <person name="Gingeras T.R."/>
            <person name="Gojobori T."/>
            <person name="Green R.E."/>
            <person name="Gustincich S."/>
            <person name="Harbers M."/>
            <person name="Hayashi Y."/>
            <person name="Hensch T.K."/>
            <person name="Hirokawa N."/>
            <person name="Hill D."/>
            <person name="Huminiecki L."/>
            <person name="Iacono M."/>
            <person name="Ikeo K."/>
            <person name="Iwama A."/>
            <person name="Ishikawa T."/>
            <person name="Jakt M."/>
            <person name="Kanapin A."/>
            <person name="Katoh M."/>
            <person name="Kawasawa Y."/>
            <person name="Kelso J."/>
            <person name="Kitamura H."/>
            <person name="Kitano H."/>
            <person name="Kollias G."/>
            <person name="Krishnan S.P."/>
            <person name="Kruger A."/>
            <person name="Kummerfeld S.K."/>
            <person name="Kurochkin I.V."/>
            <person name="Lareau L.F."/>
            <person name="Lazarevic D."/>
            <person name="Lipovich L."/>
            <person name="Liu J."/>
            <person name="Liuni S."/>
            <person name="McWilliam S."/>
            <person name="Madan Babu M."/>
            <person name="Madera M."/>
            <person name="Marchionni L."/>
            <person name="Matsuda H."/>
            <person name="Matsuzawa S."/>
            <person name="Miki H."/>
            <person name="Mignone F."/>
            <person name="Miyake S."/>
            <person name="Morris K."/>
            <person name="Mottagui-Tabar S."/>
            <person name="Mulder N."/>
            <person name="Nakano N."/>
            <person name="Nakauchi H."/>
            <person name="Ng P."/>
            <person name="Nilsson R."/>
            <person name="Nishiguchi S."/>
            <person name="Nishikawa S."/>
            <person name="Nori F."/>
            <person name="Ohara O."/>
            <person name="Okazaki Y."/>
            <person name="Orlando V."/>
            <person name="Pang K.C."/>
            <person name="Pavan W.J."/>
            <person name="Pavesi G."/>
            <person name="Pesole G."/>
            <person name="Petrovsky N."/>
            <person name="Piazza S."/>
            <person name="Reed J."/>
            <person name="Reid J.F."/>
            <person name="Ring B.Z."/>
            <person name="Ringwald M."/>
            <person name="Rost B."/>
            <person name="Ruan Y."/>
            <person name="Salzberg S.L."/>
            <person name="Sandelin A."/>
            <person name="Schneider C."/>
            <person name="Schoenbach C."/>
            <person name="Sekiguchi K."/>
            <person name="Semple C.A."/>
            <person name="Seno S."/>
            <person name="Sessa L."/>
            <person name="Sheng Y."/>
            <person name="Shibata Y."/>
            <person name="Shimada H."/>
            <person name="Shimada K."/>
            <person name="Silva D."/>
            <person name="Sinclair B."/>
            <person name="Sperling S."/>
            <person name="Stupka E."/>
            <person name="Sugiura K."/>
            <person name="Sultana R."/>
            <person name="Takenaka Y."/>
            <person name="Taki K."/>
            <person name="Tammoja K."/>
            <person name="Tan S.L."/>
            <person name="Tang S."/>
            <person name="Taylor M.S."/>
            <person name="Tegner J."/>
            <person name="Teichmann S.A."/>
            <person name="Ueda H.R."/>
            <person name="van Nimwegen E."/>
            <person name="Verardo R."/>
            <person name="Wei C.L."/>
            <person name="Yagi K."/>
            <person name="Yamanishi H."/>
            <person name="Zabarovsky E."/>
            <person name="Zhu S."/>
            <person name="Zimmer A."/>
            <person name="Hide W."/>
            <person name="Bult C."/>
            <person name="Grimmond S.M."/>
            <person name="Teasdale R.D."/>
            <person name="Liu E.T."/>
            <person name="Brusic V."/>
            <person name="Quackenbush J."/>
            <person name="Wahlestedt C."/>
            <person name="Mattick J.S."/>
            <person name="Hume D.A."/>
            <person name="Kai C."/>
            <person name="Sasaki D."/>
            <person name="Tomaru Y."/>
            <person name="Fukuda S."/>
            <person name="Kanamori-Katayama M."/>
            <person name="Suzuki M."/>
            <person name="Aoki J."/>
            <person name="Arakawa T."/>
            <person name="Iida J."/>
            <person name="Imamura K."/>
            <person name="Itoh M."/>
            <person name="Kato T."/>
            <person name="Kawaji H."/>
            <person name="Kawagashira N."/>
            <person name="Kawashima T."/>
            <person name="Kojima M."/>
            <person name="Kondo S."/>
            <person name="Konno H."/>
            <person name="Nakano K."/>
            <person name="Ninomiya N."/>
            <person name="Nishio T."/>
            <person name="Okada M."/>
            <person name="Plessy C."/>
            <person name="Shibata K."/>
            <person name="Shiraki T."/>
            <person name="Suzuki S."/>
            <person name="Tagami M."/>
            <person name="Waki K."/>
            <person name="Watahiki A."/>
            <person name="Okamura-Oho Y."/>
            <person name="Suzuki H."/>
            <person name="Kawai J."/>
            <person name="Hayashizaki Y."/>
        </authorList>
    </citation>
    <scope>NUCLEOTIDE SEQUENCE [LARGE SCALE MRNA]</scope>
    <source>
        <strain>C57BL/6J</strain>
        <tissue>Pancreas</tissue>
    </source>
</reference>
<reference key="3">
    <citation type="journal article" date="2004" name="Genome Res.">
        <title>The status, quality, and expansion of the NIH full-length cDNA project: the Mammalian Gene Collection (MGC).</title>
        <authorList>
            <consortium name="The MGC Project Team"/>
        </authorList>
    </citation>
    <scope>NUCLEOTIDE SEQUENCE [LARGE SCALE MRNA]</scope>
    <source>
        <strain>FVB/N</strain>
        <tissue>Mammary gland</tissue>
    </source>
</reference>
<reference key="4">
    <citation type="journal article" date="1998" name="J. Cell Biol.">
        <title>Ezrin/radixin/moesin (ERM) proteins bind to a positively charged amino acid cluster in the juxta-membrane cytoplasmic domain of CD44, CD43, and ICAM-2.</title>
        <authorList>
            <person name="Yonemura S."/>
            <person name="Hirao M."/>
            <person name="Doi Y."/>
            <person name="Takahashi N."/>
            <person name="Kondo T."/>
            <person name="Tsukita S."/>
            <person name="Tsukita S."/>
        </authorList>
    </citation>
    <scope>INTERACTION WITH EZR; MSN AND RDX</scope>
    <scope>SUBCELLULAR LOCATION</scope>
    <scope>MUTAGENESIS OF 253-ARG--ARG-255</scope>
</reference>
<reference key="5">
    <citation type="journal article" date="2010" name="Cell">
        <title>A tissue-specific atlas of mouse protein phosphorylation and expression.</title>
        <authorList>
            <person name="Huttlin E.L."/>
            <person name="Jedrychowski M.P."/>
            <person name="Elias J.E."/>
            <person name="Goswami T."/>
            <person name="Rad R."/>
            <person name="Beausoleil S.A."/>
            <person name="Villen J."/>
            <person name="Haas W."/>
            <person name="Sowa M.E."/>
            <person name="Gygi S.P."/>
        </authorList>
    </citation>
    <scope>IDENTIFICATION BY MASS SPECTROMETRY [LARGE SCALE ANALYSIS]</scope>
    <source>
        <tissue>Brown adipose tissue</tissue>
        <tissue>Heart</tissue>
        <tissue>Lung</tissue>
        <tissue>Spleen</tissue>
    </source>
</reference>
<gene>
    <name type="primary">Icam2</name>
    <name type="synonym">Icam-2</name>
</gene>
<accession>P35330</accession>
<accession>Q9D8Q4</accession>
<dbReference type="EMBL" id="X65493">
    <property type="protein sequence ID" value="CAA46474.1"/>
    <property type="molecule type" value="mRNA"/>
</dbReference>
<dbReference type="EMBL" id="X65490">
    <property type="protein sequence ID" value="CAA46473.1"/>
    <property type="molecule type" value="Genomic_DNA"/>
</dbReference>
<dbReference type="EMBL" id="X65491">
    <property type="protein sequence ID" value="CAA46473.1"/>
    <property type="status" value="JOINED"/>
    <property type="molecule type" value="Genomic_DNA"/>
</dbReference>
<dbReference type="EMBL" id="X65492">
    <property type="protein sequence ID" value="CAA46473.1"/>
    <property type="status" value="JOINED"/>
    <property type="molecule type" value="Genomic_DNA"/>
</dbReference>
<dbReference type="EMBL" id="AK007801">
    <property type="protein sequence ID" value="BAB25266.1"/>
    <property type="molecule type" value="mRNA"/>
</dbReference>
<dbReference type="EMBL" id="BC039128">
    <property type="protein sequence ID" value="AAH39128.1"/>
    <property type="molecule type" value="mRNA"/>
</dbReference>
<dbReference type="EMBL" id="BC039970">
    <property type="protein sequence ID" value="AAH39970.1"/>
    <property type="molecule type" value="mRNA"/>
</dbReference>
<dbReference type="CCDS" id="CCDS25555.1"/>
<dbReference type="PIR" id="A46510">
    <property type="entry name" value="A46510"/>
</dbReference>
<dbReference type="RefSeq" id="NP_034624.1">
    <property type="nucleotide sequence ID" value="NM_010494.2"/>
</dbReference>
<dbReference type="RefSeq" id="XP_006532366.1">
    <property type="nucleotide sequence ID" value="XM_006532303.3"/>
</dbReference>
<dbReference type="RefSeq" id="XP_030101455.1">
    <property type="nucleotide sequence ID" value="XM_030245595.2"/>
</dbReference>
<dbReference type="PDB" id="1J19">
    <property type="method" value="X-ray"/>
    <property type="resolution" value="2.40 A"/>
    <property type="chains" value="B=253-268"/>
</dbReference>
<dbReference type="PDBsum" id="1J19"/>
<dbReference type="SMR" id="P35330"/>
<dbReference type="DIP" id="DIP-29094N"/>
<dbReference type="FunCoup" id="P35330">
    <property type="interactions" value="408"/>
</dbReference>
<dbReference type="IntAct" id="P35330">
    <property type="interactions" value="1"/>
</dbReference>
<dbReference type="STRING" id="10090.ENSMUSP00000001055"/>
<dbReference type="GlyCosmos" id="P35330">
    <property type="glycosylation" value="5 sites, No reported glycans"/>
</dbReference>
<dbReference type="GlyGen" id="P35330">
    <property type="glycosylation" value="5 sites, 2 N-linked glycans (2 sites)"/>
</dbReference>
<dbReference type="iPTMnet" id="P35330"/>
<dbReference type="PhosphoSitePlus" id="P35330"/>
<dbReference type="SwissPalm" id="P35330"/>
<dbReference type="CPTAC" id="non-CPTAC-3315"/>
<dbReference type="jPOST" id="P35330"/>
<dbReference type="PaxDb" id="10090-ENSMUSP00000001055"/>
<dbReference type="ProteomicsDB" id="273258"/>
<dbReference type="ABCD" id="P35330">
    <property type="antibodies" value="22 sequenced antibodies"/>
</dbReference>
<dbReference type="Antibodypedia" id="796">
    <property type="antibodies" value="934 antibodies from 42 providers"/>
</dbReference>
<dbReference type="DNASU" id="15896"/>
<dbReference type="Ensembl" id="ENSMUST00000001055.15">
    <property type="protein sequence ID" value="ENSMUSP00000001055.9"/>
    <property type="gene ID" value="ENSMUSG00000001029.16"/>
</dbReference>
<dbReference type="GeneID" id="15896"/>
<dbReference type="KEGG" id="mmu:15896"/>
<dbReference type="UCSC" id="uc007lyx.1">
    <property type="organism name" value="mouse"/>
</dbReference>
<dbReference type="AGR" id="MGI:96394"/>
<dbReference type="CTD" id="3384"/>
<dbReference type="MGI" id="MGI:96394">
    <property type="gene designation" value="Icam2"/>
</dbReference>
<dbReference type="VEuPathDB" id="HostDB:ENSMUSG00000001029"/>
<dbReference type="eggNOG" id="ENOG502RZRA">
    <property type="taxonomic scope" value="Eukaryota"/>
</dbReference>
<dbReference type="GeneTree" id="ENSGT00940000161654"/>
<dbReference type="HOGENOM" id="CLU_088446_0_0_1"/>
<dbReference type="InParanoid" id="P35330"/>
<dbReference type="OMA" id="QVYEPVQ"/>
<dbReference type="OrthoDB" id="5843397at2759"/>
<dbReference type="PhylomeDB" id="P35330"/>
<dbReference type="TreeFam" id="TF333745"/>
<dbReference type="Reactome" id="R-MMU-198933">
    <property type="pathway name" value="Immunoregulatory interactions between a Lymphoid and a non-Lymphoid cell"/>
</dbReference>
<dbReference type="Reactome" id="R-MMU-216083">
    <property type="pathway name" value="Integrin cell surface interactions"/>
</dbReference>
<dbReference type="Reactome" id="R-MMU-5621575">
    <property type="pathway name" value="CD209 (DC-SIGN) signaling"/>
</dbReference>
<dbReference type="BioGRID-ORCS" id="15896">
    <property type="hits" value="2 hits in 76 CRISPR screens"/>
</dbReference>
<dbReference type="EvolutionaryTrace" id="P35330"/>
<dbReference type="PRO" id="PR:P35330"/>
<dbReference type="Proteomes" id="UP000000589">
    <property type="component" value="Chromosome 11"/>
</dbReference>
<dbReference type="RNAct" id="P35330">
    <property type="molecule type" value="protein"/>
</dbReference>
<dbReference type="Bgee" id="ENSMUSG00000001029">
    <property type="expression patterns" value="Expressed in right lung lobe and 181 other cell types or tissues"/>
</dbReference>
<dbReference type="ExpressionAtlas" id="P35330">
    <property type="expression patterns" value="baseline and differential"/>
</dbReference>
<dbReference type="GO" id="GO:0071944">
    <property type="term" value="C:cell periphery"/>
    <property type="evidence" value="ECO:0000314"/>
    <property type="project" value="MGI"/>
</dbReference>
<dbReference type="GO" id="GO:0032154">
    <property type="term" value="C:cleavage furrow"/>
    <property type="evidence" value="ECO:0007669"/>
    <property type="project" value="Ensembl"/>
</dbReference>
<dbReference type="GO" id="GO:0005902">
    <property type="term" value="C:microvillus"/>
    <property type="evidence" value="ECO:0000314"/>
    <property type="project" value="UniProtKB"/>
</dbReference>
<dbReference type="GO" id="GO:0005886">
    <property type="term" value="C:plasma membrane"/>
    <property type="evidence" value="ECO:0000314"/>
    <property type="project" value="MGI"/>
</dbReference>
<dbReference type="GO" id="GO:0001931">
    <property type="term" value="C:uropod"/>
    <property type="evidence" value="ECO:0000314"/>
    <property type="project" value="MGI"/>
</dbReference>
<dbReference type="GO" id="GO:0005178">
    <property type="term" value="F:integrin binding"/>
    <property type="evidence" value="ECO:0007669"/>
    <property type="project" value="Ensembl"/>
</dbReference>
<dbReference type="GO" id="GO:0098609">
    <property type="term" value="P:cell-cell adhesion"/>
    <property type="evidence" value="ECO:0007669"/>
    <property type="project" value="InterPro"/>
</dbReference>
<dbReference type="CDD" id="cd20995">
    <property type="entry name" value="IgI_N_ICAM-2"/>
    <property type="match status" value="1"/>
</dbReference>
<dbReference type="FunFam" id="2.60.40.10:FF:000194">
    <property type="entry name" value="Intercellular adhesion molecule 1"/>
    <property type="match status" value="1"/>
</dbReference>
<dbReference type="FunFam" id="2.60.40.10:FF:000338">
    <property type="entry name" value="intercellular adhesion molecule 5"/>
    <property type="match status" value="1"/>
</dbReference>
<dbReference type="Gene3D" id="2.60.40.10">
    <property type="entry name" value="Immunoglobulins"/>
    <property type="match status" value="2"/>
</dbReference>
<dbReference type="IDEAL" id="IID50119"/>
<dbReference type="InterPro" id="IPR013768">
    <property type="entry name" value="ICAM_N"/>
</dbReference>
<dbReference type="InterPro" id="IPR047012">
    <property type="entry name" value="ICAM_VCAM"/>
</dbReference>
<dbReference type="InterPro" id="IPR003987">
    <property type="entry name" value="ICAM_VCAM_N"/>
</dbReference>
<dbReference type="InterPro" id="IPR036179">
    <property type="entry name" value="Ig-like_dom_sf"/>
</dbReference>
<dbReference type="InterPro" id="IPR013783">
    <property type="entry name" value="Ig-like_fold"/>
</dbReference>
<dbReference type="PANTHER" id="PTHR13771">
    <property type="entry name" value="INTERCELLULAR ADHESION MOLECULE"/>
    <property type="match status" value="1"/>
</dbReference>
<dbReference type="PANTHER" id="PTHR13771:SF3">
    <property type="entry name" value="INTERCELLULAR ADHESION MOLECULE 2"/>
    <property type="match status" value="1"/>
</dbReference>
<dbReference type="Pfam" id="PF03921">
    <property type="entry name" value="ICAM_N"/>
    <property type="match status" value="1"/>
</dbReference>
<dbReference type="PRINTS" id="PR01472">
    <property type="entry name" value="ICAMVCAM1"/>
</dbReference>
<dbReference type="SUPFAM" id="SSF48726">
    <property type="entry name" value="Immunoglobulin"/>
    <property type="match status" value="2"/>
</dbReference>